<sequence length="162" mass="17192">MSGLTHFDAAGHAHMVDVGGKQETQRIAIARGTIRMLPATFALIRDGKAKKGDVLGVARIAAIQGAKRTADLIPLCHPLALTRVAVDFELDDALPGVHCVVQVETFGRTGVEMEALTAVQVGLLTVYDMCKAVDRGMVITDVSVREKRGGKSGDWKAEDVAG</sequence>
<feature type="chain" id="PRO_1000139252" description="Cyclic pyranopterin monophosphate synthase">
    <location>
        <begin position="1"/>
        <end position="162"/>
    </location>
</feature>
<feature type="active site" evidence="1">
    <location>
        <position position="128"/>
    </location>
</feature>
<feature type="binding site" evidence="1">
    <location>
        <begin position="75"/>
        <end position="77"/>
    </location>
    <ligand>
        <name>substrate</name>
    </ligand>
</feature>
<feature type="binding site" evidence="1">
    <location>
        <begin position="113"/>
        <end position="114"/>
    </location>
    <ligand>
        <name>substrate</name>
    </ligand>
</feature>
<organism>
    <name type="scientific">Burkholderia cenocepacia (strain ATCC BAA-245 / DSM 16553 / LMG 16656 / NCTC 13227 / J2315 / CF5610)</name>
    <name type="common">Burkholderia cepacia (strain J2315)</name>
    <dbReference type="NCBI Taxonomy" id="216591"/>
    <lineage>
        <taxon>Bacteria</taxon>
        <taxon>Pseudomonadati</taxon>
        <taxon>Pseudomonadota</taxon>
        <taxon>Betaproteobacteria</taxon>
        <taxon>Burkholderiales</taxon>
        <taxon>Burkholderiaceae</taxon>
        <taxon>Burkholderia</taxon>
        <taxon>Burkholderia cepacia complex</taxon>
    </lineage>
</organism>
<reference key="1">
    <citation type="journal article" date="2009" name="J. Bacteriol.">
        <title>The genome of Burkholderia cenocepacia J2315, an epidemic pathogen of cystic fibrosis patients.</title>
        <authorList>
            <person name="Holden M.T."/>
            <person name="Seth-Smith H.M."/>
            <person name="Crossman L.C."/>
            <person name="Sebaihia M."/>
            <person name="Bentley S.D."/>
            <person name="Cerdeno-Tarraga A.M."/>
            <person name="Thomson N.R."/>
            <person name="Bason N."/>
            <person name="Quail M.A."/>
            <person name="Sharp S."/>
            <person name="Cherevach I."/>
            <person name="Churcher C."/>
            <person name="Goodhead I."/>
            <person name="Hauser H."/>
            <person name="Holroyd N."/>
            <person name="Mungall K."/>
            <person name="Scott P."/>
            <person name="Walker D."/>
            <person name="White B."/>
            <person name="Rose H."/>
            <person name="Iversen P."/>
            <person name="Mil-Homens D."/>
            <person name="Rocha E.P."/>
            <person name="Fialho A.M."/>
            <person name="Baldwin A."/>
            <person name="Dowson C."/>
            <person name="Barrell B.G."/>
            <person name="Govan J.R."/>
            <person name="Vandamme P."/>
            <person name="Hart C.A."/>
            <person name="Mahenthiralingam E."/>
            <person name="Parkhill J."/>
        </authorList>
    </citation>
    <scope>NUCLEOTIDE SEQUENCE [LARGE SCALE GENOMIC DNA]</scope>
    <source>
        <strain>ATCC BAA-245 / DSM 16553 / LMG 16656 / NCTC 13227 / J2315 / CF5610</strain>
    </source>
</reference>
<keyword id="KW-0456">Lyase</keyword>
<keyword id="KW-0501">Molybdenum cofactor biosynthesis</keyword>
<dbReference type="EC" id="4.6.1.17" evidence="1"/>
<dbReference type="EMBL" id="AM747720">
    <property type="protein sequence ID" value="CAR51269.1"/>
    <property type="molecule type" value="Genomic_DNA"/>
</dbReference>
<dbReference type="RefSeq" id="WP_006482362.1">
    <property type="nucleotide sequence ID" value="NC_011000.1"/>
</dbReference>
<dbReference type="SMR" id="B4EBZ2"/>
<dbReference type="GeneID" id="56559224"/>
<dbReference type="KEGG" id="bcj:BCAL0962"/>
<dbReference type="eggNOG" id="COG0315">
    <property type="taxonomic scope" value="Bacteria"/>
</dbReference>
<dbReference type="HOGENOM" id="CLU_074693_1_1_4"/>
<dbReference type="BioCyc" id="BCEN216591:G1G1V-1064-MONOMER"/>
<dbReference type="UniPathway" id="UPA00344"/>
<dbReference type="Proteomes" id="UP000001035">
    <property type="component" value="Chromosome 1"/>
</dbReference>
<dbReference type="GO" id="GO:0061799">
    <property type="term" value="F:cyclic pyranopterin monophosphate synthase activity"/>
    <property type="evidence" value="ECO:0007669"/>
    <property type="project" value="UniProtKB-UniRule"/>
</dbReference>
<dbReference type="GO" id="GO:0006777">
    <property type="term" value="P:Mo-molybdopterin cofactor biosynthetic process"/>
    <property type="evidence" value="ECO:0007669"/>
    <property type="project" value="UniProtKB-UniRule"/>
</dbReference>
<dbReference type="CDD" id="cd01420">
    <property type="entry name" value="MoaC_PE"/>
    <property type="match status" value="1"/>
</dbReference>
<dbReference type="Gene3D" id="3.30.70.640">
    <property type="entry name" value="Molybdopterin cofactor biosynthesis C (MoaC) domain"/>
    <property type="match status" value="1"/>
</dbReference>
<dbReference type="HAMAP" id="MF_01224_B">
    <property type="entry name" value="MoaC_B"/>
    <property type="match status" value="1"/>
</dbReference>
<dbReference type="InterPro" id="IPR023045">
    <property type="entry name" value="MoaC"/>
</dbReference>
<dbReference type="InterPro" id="IPR047594">
    <property type="entry name" value="MoaC_bact/euk"/>
</dbReference>
<dbReference type="InterPro" id="IPR036522">
    <property type="entry name" value="MoaC_sf"/>
</dbReference>
<dbReference type="InterPro" id="IPR050105">
    <property type="entry name" value="MoCo_biosynth_MoaA/MoaC"/>
</dbReference>
<dbReference type="InterPro" id="IPR002820">
    <property type="entry name" value="Mopterin_CF_biosynth-C_dom"/>
</dbReference>
<dbReference type="NCBIfam" id="TIGR00581">
    <property type="entry name" value="moaC"/>
    <property type="match status" value="1"/>
</dbReference>
<dbReference type="NCBIfam" id="NF006870">
    <property type="entry name" value="PRK09364.1"/>
    <property type="match status" value="1"/>
</dbReference>
<dbReference type="PANTHER" id="PTHR22960:SF29">
    <property type="entry name" value="CYCLIC PYRANOPTERIN MONOPHOSPHATE SYNTHASE"/>
    <property type="match status" value="1"/>
</dbReference>
<dbReference type="PANTHER" id="PTHR22960">
    <property type="entry name" value="MOLYBDOPTERIN COFACTOR SYNTHESIS PROTEIN A"/>
    <property type="match status" value="1"/>
</dbReference>
<dbReference type="Pfam" id="PF01967">
    <property type="entry name" value="MoaC"/>
    <property type="match status" value="1"/>
</dbReference>
<dbReference type="SUPFAM" id="SSF55040">
    <property type="entry name" value="Molybdenum cofactor biosynthesis protein C, MoaC"/>
    <property type="match status" value="1"/>
</dbReference>
<gene>
    <name evidence="1" type="primary">moaC</name>
    <name type="ordered locus">BceJ2315_09520</name>
    <name type="ORF">BCAL0962</name>
</gene>
<protein>
    <recommendedName>
        <fullName evidence="1">Cyclic pyranopterin monophosphate synthase</fullName>
        <ecNumber evidence="1">4.6.1.17</ecNumber>
    </recommendedName>
    <alternativeName>
        <fullName evidence="1">Molybdenum cofactor biosynthesis protein C</fullName>
    </alternativeName>
</protein>
<accession>B4EBZ2</accession>
<name>MOAC_BURCJ</name>
<evidence type="ECO:0000255" key="1">
    <source>
        <dbReference type="HAMAP-Rule" id="MF_01224"/>
    </source>
</evidence>
<proteinExistence type="inferred from homology"/>
<comment type="function">
    <text evidence="1">Catalyzes the conversion of (8S)-3',8-cyclo-7,8-dihydroguanosine 5'-triphosphate to cyclic pyranopterin monophosphate (cPMP).</text>
</comment>
<comment type="catalytic activity">
    <reaction evidence="1">
        <text>(8S)-3',8-cyclo-7,8-dihydroguanosine 5'-triphosphate = cyclic pyranopterin phosphate + diphosphate</text>
        <dbReference type="Rhea" id="RHEA:49580"/>
        <dbReference type="ChEBI" id="CHEBI:33019"/>
        <dbReference type="ChEBI" id="CHEBI:59648"/>
        <dbReference type="ChEBI" id="CHEBI:131766"/>
        <dbReference type="EC" id="4.6.1.17"/>
    </reaction>
</comment>
<comment type="pathway">
    <text evidence="1">Cofactor biosynthesis; molybdopterin biosynthesis.</text>
</comment>
<comment type="subunit">
    <text evidence="1">Homohexamer; trimer of dimers.</text>
</comment>
<comment type="similarity">
    <text evidence="1">Belongs to the MoaC family.</text>
</comment>